<organism>
    <name type="scientific">Escherichia coli O157:H7 (strain EC4115 / EHEC)</name>
    <dbReference type="NCBI Taxonomy" id="444450"/>
    <lineage>
        <taxon>Bacteria</taxon>
        <taxon>Pseudomonadati</taxon>
        <taxon>Pseudomonadota</taxon>
        <taxon>Gammaproteobacteria</taxon>
        <taxon>Enterobacterales</taxon>
        <taxon>Enterobacteriaceae</taxon>
        <taxon>Escherichia</taxon>
    </lineage>
</organism>
<keyword id="KW-0010">Activator</keyword>
<keyword id="KW-0963">Cytoplasm</keyword>
<keyword id="KW-0678">Repressor</keyword>
<keyword id="KW-0694">RNA-binding</keyword>
<keyword id="KW-0810">Translation regulation</keyword>
<reference key="1">
    <citation type="journal article" date="2011" name="Proc. Natl. Acad. Sci. U.S.A.">
        <title>Genomic anatomy of Escherichia coli O157:H7 outbreaks.</title>
        <authorList>
            <person name="Eppinger M."/>
            <person name="Mammel M.K."/>
            <person name="Leclerc J.E."/>
            <person name="Ravel J."/>
            <person name="Cebula T.A."/>
        </authorList>
    </citation>
    <scope>NUCLEOTIDE SEQUENCE [LARGE SCALE GENOMIC DNA]</scope>
    <source>
        <strain>EC4115 / EHEC</strain>
    </source>
</reference>
<name>CSRA_ECO5E</name>
<proteinExistence type="inferred from homology"/>
<evidence type="ECO:0000255" key="1">
    <source>
        <dbReference type="HAMAP-Rule" id="MF_00167"/>
    </source>
</evidence>
<protein>
    <recommendedName>
        <fullName evidence="1">Translational regulator CsrA</fullName>
    </recommendedName>
    <alternativeName>
        <fullName evidence="1">Carbon storage regulator</fullName>
    </alternativeName>
</protein>
<feature type="chain" id="PRO_1000097488" description="Translational regulator CsrA">
    <location>
        <begin position="1"/>
        <end position="61"/>
    </location>
</feature>
<gene>
    <name evidence="1" type="primary">csrA</name>
    <name type="ordered locus">ECH74115_3942</name>
</gene>
<dbReference type="EMBL" id="CP001164">
    <property type="protein sequence ID" value="ACI38783.1"/>
    <property type="molecule type" value="Genomic_DNA"/>
</dbReference>
<dbReference type="RefSeq" id="WP_000906486.1">
    <property type="nucleotide sequence ID" value="NC_011353.1"/>
</dbReference>
<dbReference type="SMR" id="B5Z2A6"/>
<dbReference type="GeneID" id="98389839"/>
<dbReference type="KEGG" id="ecf:ECH74115_3942"/>
<dbReference type="HOGENOM" id="CLU_164837_2_1_6"/>
<dbReference type="GO" id="GO:0005829">
    <property type="term" value="C:cytosol"/>
    <property type="evidence" value="ECO:0007669"/>
    <property type="project" value="TreeGrafter"/>
</dbReference>
<dbReference type="GO" id="GO:0048027">
    <property type="term" value="F:mRNA 5'-UTR binding"/>
    <property type="evidence" value="ECO:0007669"/>
    <property type="project" value="UniProtKB-UniRule"/>
</dbReference>
<dbReference type="GO" id="GO:0006402">
    <property type="term" value="P:mRNA catabolic process"/>
    <property type="evidence" value="ECO:0007669"/>
    <property type="project" value="InterPro"/>
</dbReference>
<dbReference type="GO" id="GO:0045947">
    <property type="term" value="P:negative regulation of translational initiation"/>
    <property type="evidence" value="ECO:0007669"/>
    <property type="project" value="UniProtKB-UniRule"/>
</dbReference>
<dbReference type="GO" id="GO:0045948">
    <property type="term" value="P:positive regulation of translational initiation"/>
    <property type="evidence" value="ECO:0007669"/>
    <property type="project" value="UniProtKB-UniRule"/>
</dbReference>
<dbReference type="GO" id="GO:0006109">
    <property type="term" value="P:regulation of carbohydrate metabolic process"/>
    <property type="evidence" value="ECO:0007669"/>
    <property type="project" value="UniProtKB-UniRule"/>
</dbReference>
<dbReference type="FunFam" id="2.60.40.4380:FF:000001">
    <property type="entry name" value="Translational regulator CsrA"/>
    <property type="match status" value="1"/>
</dbReference>
<dbReference type="Gene3D" id="2.60.40.4380">
    <property type="entry name" value="Translational regulator CsrA"/>
    <property type="match status" value="1"/>
</dbReference>
<dbReference type="HAMAP" id="MF_00167">
    <property type="entry name" value="CsrA"/>
    <property type="match status" value="1"/>
</dbReference>
<dbReference type="InterPro" id="IPR003751">
    <property type="entry name" value="CsrA"/>
</dbReference>
<dbReference type="InterPro" id="IPR036107">
    <property type="entry name" value="CsrA_sf"/>
</dbReference>
<dbReference type="NCBIfam" id="TIGR00202">
    <property type="entry name" value="csrA"/>
    <property type="match status" value="1"/>
</dbReference>
<dbReference type="NCBIfam" id="NF002469">
    <property type="entry name" value="PRK01712.1"/>
    <property type="match status" value="1"/>
</dbReference>
<dbReference type="PANTHER" id="PTHR34984">
    <property type="entry name" value="CARBON STORAGE REGULATOR"/>
    <property type="match status" value="1"/>
</dbReference>
<dbReference type="PANTHER" id="PTHR34984:SF1">
    <property type="entry name" value="CARBON STORAGE REGULATOR"/>
    <property type="match status" value="1"/>
</dbReference>
<dbReference type="Pfam" id="PF02599">
    <property type="entry name" value="CsrA"/>
    <property type="match status" value="1"/>
</dbReference>
<dbReference type="SUPFAM" id="SSF117130">
    <property type="entry name" value="CsrA-like"/>
    <property type="match status" value="1"/>
</dbReference>
<comment type="function">
    <text evidence="1">A key translational regulator that binds mRNA to regulate translation initiation and/or mRNA stability. Mediates global changes in gene expression, shifting from rapid growth to stress survival by linking envelope stress, the stringent response and the catabolite repression systems. Usually binds in the 5'-UTR; binding at or near the Shine-Dalgarno sequence prevents ribosome-binding, repressing translation, binding elsewhere in the 5'-UTR can activate translation and/or stabilize the mRNA. Its function is antagonized by small RNA(s).</text>
</comment>
<comment type="subunit">
    <text evidence="1">Homodimer; the beta-strands of each monomer intercalate to form a hydrophobic core, while the alpha-helices form wings that extend away from the core.</text>
</comment>
<comment type="subcellular location">
    <subcellularLocation>
        <location evidence="1">Cytoplasm</location>
    </subcellularLocation>
</comment>
<comment type="similarity">
    <text evidence="1">Belongs to the CsrA/RsmA family.</text>
</comment>
<sequence length="61" mass="6856">MLILTRRVGETLMIGDEVTVTVLGVKGNQVRIGVNAPKEVSVHREEIYQRIQAEKSQQSSY</sequence>
<accession>B5Z2A6</accession>